<protein>
    <recommendedName>
        <fullName evidence="1">2,3,4,5-tetrahydropyridine-2,6-dicarboxylate N-acetyltransferase</fullName>
        <ecNumber evidence="1">2.3.1.89</ecNumber>
    </recommendedName>
    <alternativeName>
        <fullName evidence="1">Tetrahydrodipicolinate N-acetyltransferase</fullName>
        <shortName evidence="1">THP acetyltransferase</shortName>
        <shortName evidence="1">Tetrahydropicolinate acetylase</shortName>
    </alternativeName>
</protein>
<evidence type="ECO:0000255" key="1">
    <source>
        <dbReference type="HAMAP-Rule" id="MF_01691"/>
    </source>
</evidence>
<keyword id="KW-0012">Acyltransferase</keyword>
<keyword id="KW-0028">Amino-acid biosynthesis</keyword>
<keyword id="KW-0220">Diaminopimelate biosynthesis</keyword>
<keyword id="KW-0457">Lysine biosynthesis</keyword>
<keyword id="KW-0677">Repeat</keyword>
<keyword id="KW-0808">Transferase</keyword>
<name>DAPH_ANOFW</name>
<organism>
    <name type="scientific">Anoxybacillus flavithermus (strain DSM 21510 / WK1)</name>
    <dbReference type="NCBI Taxonomy" id="491915"/>
    <lineage>
        <taxon>Bacteria</taxon>
        <taxon>Bacillati</taxon>
        <taxon>Bacillota</taxon>
        <taxon>Bacilli</taxon>
        <taxon>Bacillales</taxon>
        <taxon>Anoxybacillaceae</taxon>
        <taxon>Anoxybacillus</taxon>
    </lineage>
</organism>
<comment type="function">
    <text evidence="1">Catalyzes the transfer of an acetyl group from acetyl-CoA to tetrahydrodipicolinate.</text>
</comment>
<comment type="catalytic activity">
    <reaction evidence="1">
        <text>(S)-2,3,4,5-tetrahydrodipicolinate + acetyl-CoA + H2O = L-2-acetamido-6-oxoheptanedioate + CoA</text>
        <dbReference type="Rhea" id="RHEA:13085"/>
        <dbReference type="ChEBI" id="CHEBI:15377"/>
        <dbReference type="ChEBI" id="CHEBI:16845"/>
        <dbReference type="ChEBI" id="CHEBI:57287"/>
        <dbReference type="ChEBI" id="CHEBI:57288"/>
        <dbReference type="ChEBI" id="CHEBI:58117"/>
        <dbReference type="EC" id="2.3.1.89"/>
    </reaction>
</comment>
<comment type="pathway">
    <text evidence="1">Amino-acid biosynthesis; L-lysine biosynthesis via DAP pathway; LL-2,6-diaminopimelate from (S)-tetrahydrodipicolinate (acetylase route): step 1/3.</text>
</comment>
<comment type="similarity">
    <text evidence="1">Belongs to the transferase hexapeptide repeat family. DapH subfamily.</text>
</comment>
<proteinExistence type="inferred from homology"/>
<gene>
    <name evidence="1" type="primary">dapH</name>
    <name type="ordered locus">Aflv_1904</name>
</gene>
<reference key="1">
    <citation type="journal article" date="2008" name="Genome Biol.">
        <title>Encapsulated in silica: genome, proteome and physiology of the thermophilic bacterium Anoxybacillus flavithermus WK1.</title>
        <authorList>
            <person name="Saw J.H."/>
            <person name="Mountain B.W."/>
            <person name="Feng L."/>
            <person name="Omelchenko M.V."/>
            <person name="Hou S."/>
            <person name="Saito J.A."/>
            <person name="Stott M.B."/>
            <person name="Li D."/>
            <person name="Zhao G."/>
            <person name="Wu J."/>
            <person name="Galperin M.Y."/>
            <person name="Koonin E.V."/>
            <person name="Makarova K.S."/>
            <person name="Wolf Y.I."/>
            <person name="Rigden D.J."/>
            <person name="Dunfield P.F."/>
            <person name="Wang L."/>
            <person name="Alam M."/>
        </authorList>
    </citation>
    <scope>NUCLEOTIDE SEQUENCE [LARGE SCALE GENOMIC DNA]</scope>
    <source>
        <strain>DSM 21510 / WK1</strain>
    </source>
</reference>
<accession>B7GIC1</accession>
<dbReference type="EC" id="2.3.1.89" evidence="1"/>
<dbReference type="EMBL" id="CP000922">
    <property type="protein sequence ID" value="ACJ34265.1"/>
    <property type="molecule type" value="Genomic_DNA"/>
</dbReference>
<dbReference type="SMR" id="B7GIC1"/>
<dbReference type="STRING" id="491915.Aflv_1904"/>
<dbReference type="GeneID" id="7038157"/>
<dbReference type="KEGG" id="afl:Aflv_1904"/>
<dbReference type="eggNOG" id="COG2171">
    <property type="taxonomic scope" value="Bacteria"/>
</dbReference>
<dbReference type="HOGENOM" id="CLU_103751_0_0_9"/>
<dbReference type="UniPathway" id="UPA00034">
    <property type="reaction ID" value="UER00022"/>
</dbReference>
<dbReference type="Proteomes" id="UP000000742">
    <property type="component" value="Chromosome"/>
</dbReference>
<dbReference type="GO" id="GO:0047200">
    <property type="term" value="F:tetrahydrodipicolinate N-acetyltransferase activity"/>
    <property type="evidence" value="ECO:0007669"/>
    <property type="project" value="UniProtKB-EC"/>
</dbReference>
<dbReference type="GO" id="GO:0019877">
    <property type="term" value="P:diaminopimelate biosynthetic process"/>
    <property type="evidence" value="ECO:0007669"/>
    <property type="project" value="UniProtKB-UniRule"/>
</dbReference>
<dbReference type="GO" id="GO:0009089">
    <property type="term" value="P:lysine biosynthetic process via diaminopimelate"/>
    <property type="evidence" value="ECO:0007669"/>
    <property type="project" value="UniProtKB-UniRule"/>
</dbReference>
<dbReference type="CDD" id="cd03350">
    <property type="entry name" value="LbH_THP_succinylT"/>
    <property type="match status" value="1"/>
</dbReference>
<dbReference type="Gene3D" id="2.160.10.10">
    <property type="entry name" value="Hexapeptide repeat proteins"/>
    <property type="match status" value="1"/>
</dbReference>
<dbReference type="Gene3D" id="3.30.70.250">
    <property type="entry name" value="Malonyl-CoA ACP transacylase, ACP-binding"/>
    <property type="match status" value="1"/>
</dbReference>
<dbReference type="HAMAP" id="MF_01691">
    <property type="entry name" value="DapH"/>
    <property type="match status" value="1"/>
</dbReference>
<dbReference type="InterPro" id="IPR019873">
    <property type="entry name" value="DapH"/>
</dbReference>
<dbReference type="InterPro" id="IPR013710">
    <property type="entry name" value="DapH_N"/>
</dbReference>
<dbReference type="InterPro" id="IPR001451">
    <property type="entry name" value="Hexapep"/>
</dbReference>
<dbReference type="InterPro" id="IPR018357">
    <property type="entry name" value="Hexapep_transf_CS"/>
</dbReference>
<dbReference type="InterPro" id="IPR050179">
    <property type="entry name" value="Trans_hexapeptide_repeat"/>
</dbReference>
<dbReference type="InterPro" id="IPR011004">
    <property type="entry name" value="Trimer_LpxA-like_sf"/>
</dbReference>
<dbReference type="NCBIfam" id="TIGR03532">
    <property type="entry name" value="DapD_Ac"/>
    <property type="match status" value="1"/>
</dbReference>
<dbReference type="PANTHER" id="PTHR43300:SF10">
    <property type="entry name" value="2,3,4,5-TETRAHYDROPYRIDINE-2,6-DICARBOXYLATE N-ACETYLTRANSFERASE"/>
    <property type="match status" value="1"/>
</dbReference>
<dbReference type="PANTHER" id="PTHR43300">
    <property type="entry name" value="ACETYLTRANSFERASE"/>
    <property type="match status" value="1"/>
</dbReference>
<dbReference type="Pfam" id="PF08503">
    <property type="entry name" value="DapH_N"/>
    <property type="match status" value="1"/>
</dbReference>
<dbReference type="Pfam" id="PF00132">
    <property type="entry name" value="Hexapep"/>
    <property type="match status" value="1"/>
</dbReference>
<dbReference type="Pfam" id="PF14602">
    <property type="entry name" value="Hexapep_2"/>
    <property type="match status" value="2"/>
</dbReference>
<dbReference type="SUPFAM" id="SSF51161">
    <property type="entry name" value="Trimeric LpxA-like enzymes"/>
    <property type="match status" value="1"/>
</dbReference>
<dbReference type="PROSITE" id="PS00101">
    <property type="entry name" value="HEXAPEP_TRANSFERASES"/>
    <property type="match status" value="1"/>
</dbReference>
<feature type="chain" id="PRO_0000376623" description="2,3,4,5-tetrahydropyridine-2,6-dicarboxylate N-acetyltransferase">
    <location>
        <begin position="1"/>
        <end position="235"/>
    </location>
</feature>
<sequence>MMMDANEIISFIQNSKKKTPVKVYIKGDIADIDFGPSAKTFITGQTGVVFGEWADIEAALEANKHKIEDYVVENDRRNSAIPLLDLKHIKARIEPGAIIRDQVQIGDNAVIMMGAVINIGAVVGEGTMIDMNAVLGGRATVGKNCHVGAGAVLAGVIEPPSAKPVIVEDDVMIGANAVILEGVTVGKGAVVAAGAIVTEDVPPYTVVAGVPARVIKQIDEKTKAKVEIKQELRQL</sequence>